<reference key="1">
    <citation type="journal article" date="2004" name="Nature">
        <title>Genome evolution in yeasts.</title>
        <authorList>
            <person name="Dujon B."/>
            <person name="Sherman D."/>
            <person name="Fischer G."/>
            <person name="Durrens P."/>
            <person name="Casaregola S."/>
            <person name="Lafontaine I."/>
            <person name="de Montigny J."/>
            <person name="Marck C."/>
            <person name="Neuveglise C."/>
            <person name="Talla E."/>
            <person name="Goffard N."/>
            <person name="Frangeul L."/>
            <person name="Aigle M."/>
            <person name="Anthouard V."/>
            <person name="Babour A."/>
            <person name="Barbe V."/>
            <person name="Barnay S."/>
            <person name="Blanchin S."/>
            <person name="Beckerich J.-M."/>
            <person name="Beyne E."/>
            <person name="Bleykasten C."/>
            <person name="Boisrame A."/>
            <person name="Boyer J."/>
            <person name="Cattolico L."/>
            <person name="Confanioleri F."/>
            <person name="de Daruvar A."/>
            <person name="Despons L."/>
            <person name="Fabre E."/>
            <person name="Fairhead C."/>
            <person name="Ferry-Dumazet H."/>
            <person name="Groppi A."/>
            <person name="Hantraye F."/>
            <person name="Hennequin C."/>
            <person name="Jauniaux N."/>
            <person name="Joyet P."/>
            <person name="Kachouri R."/>
            <person name="Kerrest A."/>
            <person name="Koszul R."/>
            <person name="Lemaire M."/>
            <person name="Lesur I."/>
            <person name="Ma L."/>
            <person name="Muller H."/>
            <person name="Nicaud J.-M."/>
            <person name="Nikolski M."/>
            <person name="Oztas S."/>
            <person name="Ozier-Kalogeropoulos O."/>
            <person name="Pellenz S."/>
            <person name="Potier S."/>
            <person name="Richard G.-F."/>
            <person name="Straub M.-L."/>
            <person name="Suleau A."/>
            <person name="Swennen D."/>
            <person name="Tekaia F."/>
            <person name="Wesolowski-Louvel M."/>
            <person name="Westhof E."/>
            <person name="Wirth B."/>
            <person name="Zeniou-Meyer M."/>
            <person name="Zivanovic Y."/>
            <person name="Bolotin-Fukuhara M."/>
            <person name="Thierry A."/>
            <person name="Bouchier C."/>
            <person name="Caudron B."/>
            <person name="Scarpelli C."/>
            <person name="Gaillardin C."/>
            <person name="Weissenbach J."/>
            <person name="Wincker P."/>
            <person name="Souciet J.-L."/>
        </authorList>
    </citation>
    <scope>NUCLEOTIDE SEQUENCE [LARGE SCALE GENOMIC DNA]</scope>
    <source>
        <strain>ATCC 8585 / CBS 2359 / DSM 70799 / NBRC 1267 / NRRL Y-1140 / WM37</strain>
    </source>
</reference>
<comment type="subcellular location">
    <subcellularLocation>
        <location evidence="1">Nucleus</location>
        <location evidence="1">Nucleolus</location>
    </subcellularLocation>
</comment>
<comment type="similarity">
    <text evidence="3">Belongs to the AATF family.</text>
</comment>
<dbReference type="EMBL" id="CR382123">
    <property type="protein sequence ID" value="CAH01512.1"/>
    <property type="molecule type" value="Genomic_DNA"/>
</dbReference>
<dbReference type="RefSeq" id="XP_452661.1">
    <property type="nucleotide sequence ID" value="XM_452661.1"/>
</dbReference>
<dbReference type="SMR" id="Q6CTS8"/>
<dbReference type="FunCoup" id="Q6CTS8">
    <property type="interactions" value="1004"/>
</dbReference>
<dbReference type="STRING" id="284590.Q6CTS8"/>
<dbReference type="PaxDb" id="284590-Q6CTS8"/>
<dbReference type="KEGG" id="kla:KLLA0_C10362g"/>
<dbReference type="eggNOG" id="KOG2773">
    <property type="taxonomic scope" value="Eukaryota"/>
</dbReference>
<dbReference type="HOGENOM" id="CLU_018299_2_2_1"/>
<dbReference type="InParanoid" id="Q6CTS8"/>
<dbReference type="OMA" id="GEHENNK"/>
<dbReference type="Proteomes" id="UP000000598">
    <property type="component" value="Chromosome C"/>
</dbReference>
<dbReference type="GO" id="GO:0005730">
    <property type="term" value="C:nucleolus"/>
    <property type="evidence" value="ECO:0007669"/>
    <property type="project" value="UniProtKB-SubCell"/>
</dbReference>
<dbReference type="GO" id="GO:0000462">
    <property type="term" value="P:maturation of SSU-rRNA from tricistronic rRNA transcript (SSU-rRNA, 5.8S rRNA, LSU-rRNA)"/>
    <property type="evidence" value="ECO:0007669"/>
    <property type="project" value="TreeGrafter"/>
</dbReference>
<dbReference type="InterPro" id="IPR025160">
    <property type="entry name" value="AATF"/>
</dbReference>
<dbReference type="InterPro" id="IPR039223">
    <property type="entry name" value="AATF/Bfr2"/>
</dbReference>
<dbReference type="InterPro" id="IPR012617">
    <property type="entry name" value="AATF_C"/>
</dbReference>
<dbReference type="PANTHER" id="PTHR15565">
    <property type="entry name" value="AATF PROTEIN APOPTOSIS ANTAGONIZING TRANSCRIPTION FACTOR"/>
    <property type="match status" value="1"/>
</dbReference>
<dbReference type="PANTHER" id="PTHR15565:SF0">
    <property type="entry name" value="PROTEIN AATF"/>
    <property type="match status" value="1"/>
</dbReference>
<dbReference type="Pfam" id="PF13339">
    <property type="entry name" value="AATF-Che1"/>
    <property type="match status" value="1"/>
</dbReference>
<dbReference type="Pfam" id="PF08164">
    <property type="entry name" value="TRAUB"/>
    <property type="match status" value="1"/>
</dbReference>
<name>BFR2_KLULA</name>
<keyword id="KW-0539">Nucleus</keyword>
<keyword id="KW-1185">Reference proteome</keyword>
<gene>
    <name type="primary">BFR2</name>
    <name type="ordered locus">KLLA0C10362g</name>
</gene>
<protein>
    <recommendedName>
        <fullName>Protein BFR2</fullName>
    </recommendedName>
</protein>
<accession>Q6CTS8</accession>
<evidence type="ECO:0000250" key="1"/>
<evidence type="ECO:0000256" key="2">
    <source>
        <dbReference type="SAM" id="MobiDB-lite"/>
    </source>
</evidence>
<evidence type="ECO:0000305" key="3"/>
<organism>
    <name type="scientific">Kluyveromyces lactis (strain ATCC 8585 / CBS 2359 / DSM 70799 / NBRC 1267 / NRRL Y-1140 / WM37)</name>
    <name type="common">Yeast</name>
    <name type="synonym">Candida sphaerica</name>
    <dbReference type="NCBI Taxonomy" id="284590"/>
    <lineage>
        <taxon>Eukaryota</taxon>
        <taxon>Fungi</taxon>
        <taxon>Dikarya</taxon>
        <taxon>Ascomycota</taxon>
        <taxon>Saccharomycotina</taxon>
        <taxon>Saccharomycetes</taxon>
        <taxon>Saccharomycetales</taxon>
        <taxon>Saccharomycetaceae</taxon>
        <taxon>Kluyveromyces</taxon>
    </lineage>
</organism>
<feature type="chain" id="PRO_0000056629" description="Protein BFR2">
    <location>
        <begin position="1"/>
        <end position="526"/>
    </location>
</feature>
<feature type="region of interest" description="Disordered" evidence="2">
    <location>
        <begin position="16"/>
        <end position="53"/>
    </location>
</feature>
<feature type="region of interest" description="Disordered" evidence="2">
    <location>
        <begin position="82"/>
        <end position="149"/>
    </location>
</feature>
<feature type="compositionally biased region" description="Acidic residues" evidence="2">
    <location>
        <begin position="89"/>
        <end position="114"/>
    </location>
</feature>
<feature type="compositionally biased region" description="Acidic residues" evidence="2">
    <location>
        <begin position="123"/>
        <end position="145"/>
    </location>
</feature>
<sequence length="526" mass="59455">MGKKSLAEQIADIANKPQVEDFDIENDEGVFQHGGSDSDVSSGDESEEELKKQHYVAVGKSKLRNVVDQGLAVKDKKYVGSKGSRAELFNDEEMDAPEQGESESEAESGSEESDAVSFRSDSEDVSESEATSESEIEKDREEDEETAMKKEKLAKIVQTQTKQVINNLAHSAQRDASKGYAILQQNKFFDKILDSRIKLQKALSASNQLPLSQQSWDELLDENNSKLLTSTFKVLEKVLTQCVTVRHKFQIGDHINQSENPSDFDNSKKRSFKELVHETVTLDSDLKSYRSAVLNKWSAKVSASSGKSLLQASKFKAINQSADVQVDNQLADMPRLLKRTKLNRSNTKPLLFDEDLQKGLLKELQLEENVEGDIEEENNLDIPKNYDPRRKDNNALDFTQNPYIYDDEDFYRVLLNDLVEKKISNSQQSNGVTLAITSRSENKLKKNIDTKASKGRKLNYSIQEPIANYEASVNTGYKWSDEQIDEFFAGLLGQKINFNEDDELEADTMHNEEDEEIKNDDIQIFG</sequence>
<proteinExistence type="inferred from homology"/>